<accession>P05541</accession>
<sequence length="208" mass="23400">MQPWLWLVFSVKLSALWGSSALLQTPSSLLVQTNQTAKMSCEAKTFPKGTTIYWLRELQDSNKNKHFEFLASRTSTKGIKYGERVKKNMTLSFNSTLPFLKIMDVKPEDSGFYFCAMVGSPMVVFGTGTKLTVVDVLPTTAPTKKTTLKKKQCPTPHPKTQKGLTCGLITLSLLVACILVLLVSLSVAIHFHCMRRRARIHFMKQFHK</sequence>
<dbReference type="EMBL" id="X04310">
    <property type="protein sequence ID" value="CAA27850.1"/>
    <property type="molecule type" value="mRNA"/>
</dbReference>
<dbReference type="PIR" id="A24184">
    <property type="entry name" value="A24184"/>
</dbReference>
<dbReference type="RefSeq" id="NP_113727.1">
    <property type="nucleotide sequence ID" value="NM_031539.1"/>
</dbReference>
<dbReference type="SMR" id="P05541"/>
<dbReference type="FunCoup" id="P05541">
    <property type="interactions" value="586"/>
</dbReference>
<dbReference type="STRING" id="10116.ENSRNOP00000009392"/>
<dbReference type="GlyCosmos" id="P05541">
    <property type="glycosylation" value="3 sites, No reported glycans"/>
</dbReference>
<dbReference type="GlyGen" id="P05541">
    <property type="glycosylation" value="3 sites"/>
</dbReference>
<dbReference type="PhosphoSitePlus" id="P05541"/>
<dbReference type="PaxDb" id="10116-ENSRNOP00000009392"/>
<dbReference type="GeneID" id="24931"/>
<dbReference type="KEGG" id="rno:24931"/>
<dbReference type="UCSC" id="RGD:2317">
    <property type="organism name" value="rat"/>
</dbReference>
<dbReference type="AGR" id="RGD:2317"/>
<dbReference type="CTD" id="926"/>
<dbReference type="RGD" id="2317">
    <property type="gene designation" value="Cd8b"/>
</dbReference>
<dbReference type="eggNOG" id="ENOG502SANQ">
    <property type="taxonomic scope" value="Eukaryota"/>
</dbReference>
<dbReference type="InParanoid" id="P05541"/>
<dbReference type="PhylomeDB" id="P05541"/>
<dbReference type="Reactome" id="R-RNO-198933">
    <property type="pathway name" value="Immunoregulatory interactions between a Lymphoid and a non-Lymphoid cell"/>
</dbReference>
<dbReference type="PRO" id="PR:P05541"/>
<dbReference type="Proteomes" id="UP000002494">
    <property type="component" value="Unplaced"/>
</dbReference>
<dbReference type="GO" id="GO:0009986">
    <property type="term" value="C:cell surface"/>
    <property type="evidence" value="ECO:0000266"/>
    <property type="project" value="RGD"/>
</dbReference>
<dbReference type="GO" id="GO:0009897">
    <property type="term" value="C:external side of plasma membrane"/>
    <property type="evidence" value="ECO:0000266"/>
    <property type="project" value="RGD"/>
</dbReference>
<dbReference type="GO" id="GO:0005886">
    <property type="term" value="C:plasma membrane"/>
    <property type="evidence" value="ECO:0000266"/>
    <property type="project" value="RGD"/>
</dbReference>
<dbReference type="GO" id="GO:0043235">
    <property type="term" value="C:receptor complex"/>
    <property type="evidence" value="ECO:0000266"/>
    <property type="project" value="RGD"/>
</dbReference>
<dbReference type="GO" id="GO:0015026">
    <property type="term" value="F:coreceptor activity"/>
    <property type="evidence" value="ECO:0007669"/>
    <property type="project" value="InterPro"/>
</dbReference>
<dbReference type="GO" id="GO:0042288">
    <property type="term" value="F:MHC class I protein binding"/>
    <property type="evidence" value="ECO:0007669"/>
    <property type="project" value="InterPro"/>
</dbReference>
<dbReference type="GO" id="GO:0002250">
    <property type="term" value="P:adaptive immune response"/>
    <property type="evidence" value="ECO:0007669"/>
    <property type="project" value="UniProtKB-KW"/>
</dbReference>
<dbReference type="GO" id="GO:0042110">
    <property type="term" value="P:T cell activation"/>
    <property type="evidence" value="ECO:0000266"/>
    <property type="project" value="RGD"/>
</dbReference>
<dbReference type="GO" id="GO:0050852">
    <property type="term" value="P:T cell receptor signaling pathway"/>
    <property type="evidence" value="ECO:0000266"/>
    <property type="project" value="RGD"/>
</dbReference>
<dbReference type="CDD" id="cd07700">
    <property type="entry name" value="IgV_CD8_beta"/>
    <property type="match status" value="1"/>
</dbReference>
<dbReference type="FunFam" id="2.60.40.10:FF:000645">
    <property type="entry name" value="T-cell surface glycoprotein CD8 beta chain"/>
    <property type="match status" value="1"/>
</dbReference>
<dbReference type="Gene3D" id="2.60.40.10">
    <property type="entry name" value="Immunoglobulins"/>
    <property type="match status" value="1"/>
</dbReference>
<dbReference type="InterPro" id="IPR042414">
    <property type="entry name" value="CD8B"/>
</dbReference>
<dbReference type="InterPro" id="IPR007110">
    <property type="entry name" value="Ig-like_dom"/>
</dbReference>
<dbReference type="InterPro" id="IPR036179">
    <property type="entry name" value="Ig-like_dom_sf"/>
</dbReference>
<dbReference type="InterPro" id="IPR013783">
    <property type="entry name" value="Ig-like_fold"/>
</dbReference>
<dbReference type="InterPro" id="IPR003599">
    <property type="entry name" value="Ig_sub"/>
</dbReference>
<dbReference type="InterPro" id="IPR013106">
    <property type="entry name" value="Ig_V-set"/>
</dbReference>
<dbReference type="PANTHER" id="PTHR11292">
    <property type="entry name" value="T-CELL SURFACE GLYCOPROTEIN CD8 BETA CHAIN"/>
    <property type="match status" value="1"/>
</dbReference>
<dbReference type="PANTHER" id="PTHR11292:SF7">
    <property type="entry name" value="T-CELL SURFACE GLYCOPROTEIN CD8 BETA CHAIN-RELATED"/>
    <property type="match status" value="1"/>
</dbReference>
<dbReference type="Pfam" id="PF07686">
    <property type="entry name" value="V-set"/>
    <property type="match status" value="1"/>
</dbReference>
<dbReference type="SMART" id="SM00409">
    <property type="entry name" value="IG"/>
    <property type="match status" value="1"/>
</dbReference>
<dbReference type="SMART" id="SM00406">
    <property type="entry name" value="IGv"/>
    <property type="match status" value="1"/>
</dbReference>
<dbReference type="SUPFAM" id="SSF48726">
    <property type="entry name" value="Immunoglobulin"/>
    <property type="match status" value="1"/>
</dbReference>
<dbReference type="PROSITE" id="PS50835">
    <property type="entry name" value="IG_LIKE"/>
    <property type="match status" value="1"/>
</dbReference>
<evidence type="ECO:0000250" key="1">
    <source>
        <dbReference type="UniProtKB" id="P10300"/>
    </source>
</evidence>
<evidence type="ECO:0000250" key="2">
    <source>
        <dbReference type="UniProtKB" id="P10966"/>
    </source>
</evidence>
<evidence type="ECO:0000255" key="3"/>
<evidence type="ECO:0000255" key="4">
    <source>
        <dbReference type="PROSITE-ProRule" id="PRU00114"/>
    </source>
</evidence>
<name>CD8B_RAT</name>
<protein>
    <recommendedName>
        <fullName>T-cell surface glycoprotein CD8 beta chain</fullName>
    </recommendedName>
    <alternativeName>
        <fullName>CD8 antigen 37 kDa chain</fullName>
    </alternativeName>
    <alternativeName>
        <fullName>OX-8 membrane antigen</fullName>
    </alternativeName>
    <cdAntigenName>CD8b</cdAntigenName>
</protein>
<keyword id="KW-1064">Adaptive immunity</keyword>
<keyword id="KW-1003">Cell membrane</keyword>
<keyword id="KW-1015">Disulfide bond</keyword>
<keyword id="KW-0325">Glycoprotein</keyword>
<keyword id="KW-0391">Immunity</keyword>
<keyword id="KW-0393">Immunoglobulin domain</keyword>
<keyword id="KW-0449">Lipoprotein</keyword>
<keyword id="KW-0472">Membrane</keyword>
<keyword id="KW-0564">Palmitate</keyword>
<keyword id="KW-1185">Reference proteome</keyword>
<keyword id="KW-0732">Signal</keyword>
<keyword id="KW-0812">Transmembrane</keyword>
<keyword id="KW-1133">Transmembrane helix</keyword>
<feature type="signal peptide">
    <location>
        <begin position="1"/>
        <end position="21"/>
    </location>
</feature>
<feature type="chain" id="PRO_0000014646" description="T-cell surface glycoprotein CD8 beta chain">
    <location>
        <begin position="22"/>
        <end position="208"/>
    </location>
</feature>
<feature type="topological domain" description="Extracellular" evidence="3">
    <location>
        <begin position="22"/>
        <end position="168"/>
    </location>
</feature>
<feature type="transmembrane region" description="Helical" evidence="3">
    <location>
        <begin position="169"/>
        <end position="189"/>
    </location>
</feature>
<feature type="topological domain" description="Cytoplasmic" evidence="3">
    <location>
        <begin position="190"/>
        <end position="208"/>
    </location>
</feature>
<feature type="domain" description="Ig-like V-type">
    <location>
        <begin position="22"/>
        <end position="131"/>
    </location>
</feature>
<feature type="glycosylation site" description="N-linked (GlcNAc...) asparagine" evidence="3">
    <location>
        <position position="34"/>
    </location>
</feature>
<feature type="glycosylation site" description="N-linked (GlcNAc...) asparagine" evidence="3">
    <location>
        <position position="88"/>
    </location>
</feature>
<feature type="glycosylation site" description="N-linked (GlcNAc...) asparagine" evidence="3">
    <location>
        <position position="94"/>
    </location>
</feature>
<feature type="disulfide bond" evidence="4">
    <location>
        <begin position="41"/>
        <end position="115"/>
    </location>
</feature>
<feature type="sequence variant">
    <original>H</original>
    <variation>R</variation>
    <location>
        <position position="201"/>
    </location>
</feature>
<organism>
    <name type="scientific">Rattus norvegicus</name>
    <name type="common">Rat</name>
    <dbReference type="NCBI Taxonomy" id="10116"/>
    <lineage>
        <taxon>Eukaryota</taxon>
        <taxon>Metazoa</taxon>
        <taxon>Chordata</taxon>
        <taxon>Craniata</taxon>
        <taxon>Vertebrata</taxon>
        <taxon>Euteleostomi</taxon>
        <taxon>Mammalia</taxon>
        <taxon>Eutheria</taxon>
        <taxon>Euarchontoglires</taxon>
        <taxon>Glires</taxon>
        <taxon>Rodentia</taxon>
        <taxon>Myomorpha</taxon>
        <taxon>Muroidea</taxon>
        <taxon>Muridae</taxon>
        <taxon>Murinae</taxon>
        <taxon>Rattus</taxon>
    </lineage>
</organism>
<comment type="function">
    <text evidence="1 2">Integral membrane glycoprotein that plays an essential role in the immune response and serves multiple functions in responses against both external and internal offenses. In T-cells, functions primarily as a coreceptor for MHC class I molecule:peptide complex. The antigens presented by class I peptides are derived from cytosolic proteins while class II derived from extracellular proteins. Interacts simultaneously with the T-cell receptor (TCR) and the MHC class I proteins presented by antigen presenting cells (APCs). In turn, recruits the Src kinase LCK to the vicinity of the TCR-CD3 complex. A palmitoylation site in the cytoplasmic tail of CD8B chain contributes to partitioning of CD8 into the plasma membrane lipid rafts where signaling proteins are enriched. Once LCK recruited, it initiates different intracellular signaling pathways by phosphorylating various substrates ultimately leading to lymphokine production, motility, adhesion and activation of cytotoxic T-lymphocytes (CTLs). Additionally, plays a critical role in thymic selection of CD8+ T-cells.</text>
</comment>
<comment type="subunit">
    <text evidence="1 2">Forms disulfide-linked heterodimers with CD8A at the cell surface. Interacts with CD3D; this interaction couples TCR-CD3 with CD8. Interacts with LCK.</text>
</comment>
<comment type="subcellular location">
    <subcellularLocation>
        <location evidence="2">Cell membrane</location>
        <topology evidence="2">Single-pass type I membrane protein</topology>
    </subcellularLocation>
    <text evidence="2">Requires the partner CD8A for efficient cell surface expression. The heterodimer CD8A/CD8B localizes to lipid rafts due to CD8B cytoplasmic tail palmitoylation.</text>
</comment>
<comment type="PTM">
    <text evidence="2">Phosphorylated as a consequence of T-cell activation.</text>
</comment>
<comment type="PTM">
    <text evidence="2">Palmitoylated at the cytoplasmic tail and thereby targets the heterodimer CD8A/CD8B to lipid rafts unlike CD8A homodimers.</text>
</comment>
<proteinExistence type="evidence at transcript level"/>
<gene>
    <name type="primary">Cd8b</name>
    <name type="synonym">Cd8b1</name>
</gene>
<reference key="1">
    <citation type="journal article" date="1986" name="Nature">
        <title>Striking similarities between antigen receptor J pieces and sequence in the second chain of the murine CD8 antigen.</title>
        <authorList>
            <person name="Johnson P."/>
            <person name="Williams A.F."/>
        </authorList>
    </citation>
    <scope>NUCLEOTIDE SEQUENCE [MRNA]</scope>
    <source>
        <strain>Sprague-Dawley</strain>
        <tissue>Thymocyte</tissue>
    </source>
</reference>